<accession>Q12IK4</accession>
<protein>
    <recommendedName>
        <fullName evidence="1">D-aminoacyl-tRNA deacylase</fullName>
        <shortName evidence="1">DTD</shortName>
        <ecNumber evidence="1">3.1.1.96</ecNumber>
    </recommendedName>
    <alternativeName>
        <fullName evidence="1">Gly-tRNA(Ala) deacylase</fullName>
    </alternativeName>
</protein>
<keyword id="KW-0963">Cytoplasm</keyword>
<keyword id="KW-0378">Hydrolase</keyword>
<keyword id="KW-1185">Reference proteome</keyword>
<keyword id="KW-0694">RNA-binding</keyword>
<keyword id="KW-0820">tRNA-binding</keyword>
<feature type="chain" id="PRO_1000050882" description="D-aminoacyl-tRNA deacylase">
    <location>
        <begin position="1"/>
        <end position="145"/>
    </location>
</feature>
<feature type="short sequence motif" description="Gly-cisPro motif, important for rejection of L-amino acids" evidence="1">
    <location>
        <begin position="137"/>
        <end position="138"/>
    </location>
</feature>
<gene>
    <name evidence="1" type="primary">dtd</name>
    <name type="ordered locus">Sden_3447</name>
</gene>
<proteinExistence type="inferred from homology"/>
<dbReference type="EC" id="3.1.1.96" evidence="1"/>
<dbReference type="EMBL" id="CP000302">
    <property type="protein sequence ID" value="ABE56722.1"/>
    <property type="molecule type" value="Genomic_DNA"/>
</dbReference>
<dbReference type="RefSeq" id="WP_011497863.1">
    <property type="nucleotide sequence ID" value="NC_007954.1"/>
</dbReference>
<dbReference type="SMR" id="Q12IK4"/>
<dbReference type="STRING" id="318161.Sden_3447"/>
<dbReference type="KEGG" id="sdn:Sden_3447"/>
<dbReference type="eggNOG" id="COG1490">
    <property type="taxonomic scope" value="Bacteria"/>
</dbReference>
<dbReference type="HOGENOM" id="CLU_076901_1_0_6"/>
<dbReference type="OrthoDB" id="9801395at2"/>
<dbReference type="Proteomes" id="UP000001982">
    <property type="component" value="Chromosome"/>
</dbReference>
<dbReference type="GO" id="GO:0005737">
    <property type="term" value="C:cytoplasm"/>
    <property type="evidence" value="ECO:0007669"/>
    <property type="project" value="UniProtKB-SubCell"/>
</dbReference>
<dbReference type="GO" id="GO:0051500">
    <property type="term" value="F:D-tyrosyl-tRNA(Tyr) deacylase activity"/>
    <property type="evidence" value="ECO:0007669"/>
    <property type="project" value="TreeGrafter"/>
</dbReference>
<dbReference type="GO" id="GO:0106026">
    <property type="term" value="F:Gly-tRNA(Ala) deacylase activity"/>
    <property type="evidence" value="ECO:0007669"/>
    <property type="project" value="UniProtKB-UniRule"/>
</dbReference>
<dbReference type="GO" id="GO:0043908">
    <property type="term" value="F:Ser(Gly)-tRNA(Ala) hydrolase activity"/>
    <property type="evidence" value="ECO:0007669"/>
    <property type="project" value="UniProtKB-UniRule"/>
</dbReference>
<dbReference type="GO" id="GO:0000049">
    <property type="term" value="F:tRNA binding"/>
    <property type="evidence" value="ECO:0007669"/>
    <property type="project" value="UniProtKB-UniRule"/>
</dbReference>
<dbReference type="GO" id="GO:0019478">
    <property type="term" value="P:D-amino acid catabolic process"/>
    <property type="evidence" value="ECO:0007669"/>
    <property type="project" value="UniProtKB-UniRule"/>
</dbReference>
<dbReference type="CDD" id="cd00563">
    <property type="entry name" value="Dtyr_deacylase"/>
    <property type="match status" value="1"/>
</dbReference>
<dbReference type="FunFam" id="3.50.80.10:FF:000001">
    <property type="entry name" value="D-aminoacyl-tRNA deacylase"/>
    <property type="match status" value="1"/>
</dbReference>
<dbReference type="Gene3D" id="3.50.80.10">
    <property type="entry name" value="D-tyrosyl-tRNA(Tyr) deacylase"/>
    <property type="match status" value="1"/>
</dbReference>
<dbReference type="HAMAP" id="MF_00518">
    <property type="entry name" value="Deacylase_Dtd"/>
    <property type="match status" value="1"/>
</dbReference>
<dbReference type="InterPro" id="IPR003732">
    <property type="entry name" value="Daa-tRNA_deacyls_DTD"/>
</dbReference>
<dbReference type="InterPro" id="IPR023509">
    <property type="entry name" value="DTD-like_sf"/>
</dbReference>
<dbReference type="NCBIfam" id="TIGR00256">
    <property type="entry name" value="D-aminoacyl-tRNA deacylase"/>
    <property type="match status" value="1"/>
</dbReference>
<dbReference type="PANTHER" id="PTHR10472:SF5">
    <property type="entry name" value="D-AMINOACYL-TRNA DEACYLASE 1"/>
    <property type="match status" value="1"/>
</dbReference>
<dbReference type="PANTHER" id="PTHR10472">
    <property type="entry name" value="D-TYROSYL-TRNA TYR DEACYLASE"/>
    <property type="match status" value="1"/>
</dbReference>
<dbReference type="Pfam" id="PF02580">
    <property type="entry name" value="Tyr_Deacylase"/>
    <property type="match status" value="1"/>
</dbReference>
<dbReference type="SUPFAM" id="SSF69500">
    <property type="entry name" value="DTD-like"/>
    <property type="match status" value="1"/>
</dbReference>
<reference key="1">
    <citation type="submission" date="2006-03" db="EMBL/GenBank/DDBJ databases">
        <title>Complete sequence of Shewanella denitrificans OS217.</title>
        <authorList>
            <consortium name="US DOE Joint Genome Institute"/>
            <person name="Copeland A."/>
            <person name="Lucas S."/>
            <person name="Lapidus A."/>
            <person name="Barry K."/>
            <person name="Detter J.C."/>
            <person name="Glavina del Rio T."/>
            <person name="Hammon N."/>
            <person name="Israni S."/>
            <person name="Dalin E."/>
            <person name="Tice H."/>
            <person name="Pitluck S."/>
            <person name="Brettin T."/>
            <person name="Bruce D."/>
            <person name="Han C."/>
            <person name="Tapia R."/>
            <person name="Gilna P."/>
            <person name="Kiss H."/>
            <person name="Schmutz J."/>
            <person name="Larimer F."/>
            <person name="Land M."/>
            <person name="Hauser L."/>
            <person name="Kyrpides N."/>
            <person name="Lykidis A."/>
            <person name="Richardson P."/>
        </authorList>
    </citation>
    <scope>NUCLEOTIDE SEQUENCE [LARGE SCALE GENOMIC DNA]</scope>
    <source>
        <strain>OS217 / ATCC BAA-1090 / DSM 15013</strain>
    </source>
</reference>
<comment type="function">
    <text evidence="1">An aminoacyl-tRNA editing enzyme that deacylates mischarged D-aminoacyl-tRNAs. Also deacylates mischarged glycyl-tRNA(Ala), protecting cells against glycine mischarging by AlaRS. Acts via tRNA-based rather than protein-based catalysis; rejects L-amino acids rather than detecting D-amino acids in the active site. By recycling D-aminoacyl-tRNA to D-amino acids and free tRNA molecules, this enzyme counteracts the toxicity associated with the formation of D-aminoacyl-tRNA entities in vivo and helps enforce protein L-homochirality.</text>
</comment>
<comment type="catalytic activity">
    <reaction evidence="1">
        <text>glycyl-tRNA(Ala) + H2O = tRNA(Ala) + glycine + H(+)</text>
        <dbReference type="Rhea" id="RHEA:53744"/>
        <dbReference type="Rhea" id="RHEA-COMP:9657"/>
        <dbReference type="Rhea" id="RHEA-COMP:13640"/>
        <dbReference type="ChEBI" id="CHEBI:15377"/>
        <dbReference type="ChEBI" id="CHEBI:15378"/>
        <dbReference type="ChEBI" id="CHEBI:57305"/>
        <dbReference type="ChEBI" id="CHEBI:78442"/>
        <dbReference type="ChEBI" id="CHEBI:78522"/>
        <dbReference type="EC" id="3.1.1.96"/>
    </reaction>
</comment>
<comment type="catalytic activity">
    <reaction evidence="1">
        <text>a D-aminoacyl-tRNA + H2O = a tRNA + a D-alpha-amino acid + H(+)</text>
        <dbReference type="Rhea" id="RHEA:13953"/>
        <dbReference type="Rhea" id="RHEA-COMP:10123"/>
        <dbReference type="Rhea" id="RHEA-COMP:10124"/>
        <dbReference type="ChEBI" id="CHEBI:15377"/>
        <dbReference type="ChEBI" id="CHEBI:15378"/>
        <dbReference type="ChEBI" id="CHEBI:59871"/>
        <dbReference type="ChEBI" id="CHEBI:78442"/>
        <dbReference type="ChEBI" id="CHEBI:79333"/>
        <dbReference type="EC" id="3.1.1.96"/>
    </reaction>
</comment>
<comment type="subunit">
    <text evidence="1">Homodimer.</text>
</comment>
<comment type="subcellular location">
    <subcellularLocation>
        <location evidence="1">Cytoplasm</location>
    </subcellularLocation>
</comment>
<comment type="domain">
    <text evidence="1">A Gly-cisPro motif from one monomer fits into the active site of the other monomer to allow specific chiral rejection of L-amino acids.</text>
</comment>
<comment type="similarity">
    <text evidence="1">Belongs to the DTD family.</text>
</comment>
<sequence length="145" mass="15782">MIALIQRVKSASVQVDAEIVGKIDSGLLVFLGVEQQDNIEAMEKLATKVISYRIFNDENGKMNLSLKQAGGALLCVSQFTLAADTGRGLRPSFSKAATPEQANHLYEAFIDYCRLQGVETQIGRFGADMQVSLINDGPVTFNLQV</sequence>
<evidence type="ECO:0000255" key="1">
    <source>
        <dbReference type="HAMAP-Rule" id="MF_00518"/>
    </source>
</evidence>
<name>DTD_SHEDO</name>
<organism>
    <name type="scientific">Shewanella denitrificans (strain OS217 / ATCC BAA-1090 / DSM 15013)</name>
    <dbReference type="NCBI Taxonomy" id="318161"/>
    <lineage>
        <taxon>Bacteria</taxon>
        <taxon>Pseudomonadati</taxon>
        <taxon>Pseudomonadota</taxon>
        <taxon>Gammaproteobacteria</taxon>
        <taxon>Alteromonadales</taxon>
        <taxon>Shewanellaceae</taxon>
        <taxon>Shewanella</taxon>
    </lineage>
</organism>